<name>NEU1_SHEEP</name>
<accession>P13389</accession>
<accession>P01188</accession>
<protein>
    <recommendedName>
        <fullName>Oxytocin-neurophysin 1</fullName>
        <shortName>OT-NPI</shortName>
    </recommendedName>
    <component>
        <recommendedName>
            <fullName>Oxytocin</fullName>
        </recommendedName>
        <alternativeName>
            <fullName>Ocytocin</fullName>
        </alternativeName>
    </component>
    <component>
        <recommendedName>
            <fullName>Neurophysin 1</fullName>
        </recommendedName>
    </component>
</protein>
<gene>
    <name type="primary">OXT</name>
</gene>
<keyword id="KW-0027">Amidation</keyword>
<keyword id="KW-0165">Cleavage on pair of basic residues</keyword>
<keyword id="KW-0903">Direct protein sequencing</keyword>
<keyword id="KW-1015">Disulfide bond</keyword>
<keyword id="KW-0372">Hormone</keyword>
<keyword id="KW-1185">Reference proteome</keyword>
<keyword id="KW-0732">Signal</keyword>
<evidence type="ECO:0000250" key="1">
    <source>
        <dbReference type="UniProtKB" id="P01175"/>
    </source>
</evidence>
<evidence type="ECO:0000250" key="2">
    <source>
        <dbReference type="UniProtKB" id="P01178"/>
    </source>
</evidence>
<evidence type="ECO:0000269" key="3">
    <source ref="3"/>
</evidence>
<evidence type="ECO:0000305" key="4"/>
<proteinExistence type="evidence at protein level"/>
<reference key="1">
    <citation type="journal article" date="1989" name="Nucleic Acids Res.">
        <title>Nucleotide sequence of a full length cDNA clone encoding the oxytocin-neurophysin I precursor isolated from the ovine corpus luteum.</title>
        <authorList>
            <person name="Jones D.S.C."/>
            <person name="Flint A.P.F."/>
        </authorList>
    </citation>
    <scope>NUCLEOTIDE SEQUENCE [MRNA]</scope>
    <source>
        <tissue>Corpus luteum</tissue>
    </source>
</reference>
<reference key="2">
    <citation type="journal article" date="1990" name="Reprod. Fertil. Dev.">
        <title>Structure and ovarian expression of the oxytocin gene in sheep.</title>
        <authorList>
            <person name="Ivell R."/>
            <person name="Hunt N."/>
            <person name="Abend N."/>
            <person name="Brackman B."/>
            <person name="Nollmeyer D."/>
            <person name="Lamsa J.C."/>
            <person name="McCracken J.A."/>
        </authorList>
    </citation>
    <scope>NUCLEOTIDE SEQUENCE [GENOMIC DNA]</scope>
    <source>
        <tissue>Ovary</tissue>
    </source>
</reference>
<reference key="3">
    <citation type="journal article" date="1959" name="C. R. Hebd. Seances Acad. Sci., D, Sci. Nat.">
        <title>Purification and structure of sheep oxytocin and vasopressin.</title>
        <authorList>
            <person name="Acher R."/>
            <person name="Chauvet J."/>
            <person name="Lenci M.T."/>
        </authorList>
    </citation>
    <scope>PROTEIN SEQUENCE OF 20-28</scope>
    <scope>AMIDATION AT GLY-28</scope>
</reference>
<dbReference type="EMBL" id="X16052">
    <property type="protein sequence ID" value="CAA34184.1"/>
    <property type="molecule type" value="mRNA"/>
</dbReference>
<dbReference type="EMBL" id="X16052">
    <property type="protein sequence ID" value="CAA34185.1"/>
    <property type="status" value="ALT_SEQ"/>
    <property type="molecule type" value="mRNA"/>
</dbReference>
<dbReference type="EMBL" id="X16052">
    <property type="protein sequence ID" value="CAA34186.1"/>
    <property type="status" value="ALT_INIT"/>
    <property type="molecule type" value="mRNA"/>
</dbReference>
<dbReference type="EMBL" id="X55131">
    <property type="protein sequence ID" value="CAA38924.1"/>
    <property type="molecule type" value="Genomic_DNA"/>
</dbReference>
<dbReference type="PIR" id="S06086">
    <property type="entry name" value="NFSH1"/>
</dbReference>
<dbReference type="RefSeq" id="NP_001009801.1">
    <property type="nucleotide sequence ID" value="NM_001009801.2"/>
</dbReference>
<dbReference type="BMRB" id="P13389"/>
<dbReference type="SMR" id="P13389"/>
<dbReference type="STRING" id="9940.ENSOARP00000004918"/>
<dbReference type="GeneID" id="443390"/>
<dbReference type="KEGG" id="oas:443390"/>
<dbReference type="CTD" id="5020"/>
<dbReference type="OrthoDB" id="10056056at2759"/>
<dbReference type="Proteomes" id="UP000002356">
    <property type="component" value="Unplaced"/>
</dbReference>
<dbReference type="GO" id="GO:0005615">
    <property type="term" value="C:extracellular space"/>
    <property type="evidence" value="ECO:0000250"/>
    <property type="project" value="AgBase"/>
</dbReference>
<dbReference type="GO" id="GO:0030141">
    <property type="term" value="C:secretory granule"/>
    <property type="evidence" value="ECO:0007669"/>
    <property type="project" value="TreeGrafter"/>
</dbReference>
<dbReference type="GO" id="GO:0005185">
    <property type="term" value="F:neurohypophyseal hormone activity"/>
    <property type="evidence" value="ECO:0007669"/>
    <property type="project" value="InterPro"/>
</dbReference>
<dbReference type="GO" id="GO:0031855">
    <property type="term" value="F:oxytocin receptor binding"/>
    <property type="evidence" value="ECO:0007669"/>
    <property type="project" value="TreeGrafter"/>
</dbReference>
<dbReference type="GO" id="GO:0031894">
    <property type="term" value="F:V1A vasopressin receptor binding"/>
    <property type="evidence" value="ECO:0007669"/>
    <property type="project" value="TreeGrafter"/>
</dbReference>
<dbReference type="GO" id="GO:0120162">
    <property type="term" value="P:positive regulation of cold-induced thermogenesis"/>
    <property type="evidence" value="ECO:0007669"/>
    <property type="project" value="Ensembl"/>
</dbReference>
<dbReference type="GO" id="GO:0043207">
    <property type="term" value="P:response to external biotic stimulus"/>
    <property type="evidence" value="ECO:0000250"/>
    <property type="project" value="AgBase"/>
</dbReference>
<dbReference type="GO" id="GO:0032094">
    <property type="term" value="P:response to food"/>
    <property type="evidence" value="ECO:0000250"/>
    <property type="project" value="AgBase"/>
</dbReference>
<dbReference type="GO" id="GO:0009612">
    <property type="term" value="P:response to mechanical stimulus"/>
    <property type="evidence" value="ECO:0000250"/>
    <property type="project" value="AgBase"/>
</dbReference>
<dbReference type="FunFam" id="2.60.9.10:FF:000001">
    <property type="entry name" value="oxytocin-neurophysin 1"/>
    <property type="match status" value="1"/>
</dbReference>
<dbReference type="Gene3D" id="2.60.9.10">
    <property type="entry name" value="Neurohypophysial hormone domain"/>
    <property type="match status" value="1"/>
</dbReference>
<dbReference type="InterPro" id="IPR000981">
    <property type="entry name" value="Neurhyp_horm"/>
</dbReference>
<dbReference type="InterPro" id="IPR036387">
    <property type="entry name" value="Neurhyp_horm_dom_sf"/>
</dbReference>
<dbReference type="InterPro" id="IPR022423">
    <property type="entry name" value="Neurohypophysial_hormone_CS"/>
</dbReference>
<dbReference type="PANTHER" id="PTHR11681">
    <property type="entry name" value="NEUROPHYSIN"/>
    <property type="match status" value="1"/>
</dbReference>
<dbReference type="PANTHER" id="PTHR11681:SF2">
    <property type="entry name" value="OXYTOCIN-NEUROPHYSIN 1"/>
    <property type="match status" value="1"/>
</dbReference>
<dbReference type="Pfam" id="PF00220">
    <property type="entry name" value="Hormone_4"/>
    <property type="match status" value="1"/>
</dbReference>
<dbReference type="Pfam" id="PF00184">
    <property type="entry name" value="Hormone_5"/>
    <property type="match status" value="1"/>
</dbReference>
<dbReference type="PIRSF" id="PIRSF001815">
    <property type="entry name" value="Nonapeptide_hormone_precursor"/>
    <property type="match status" value="1"/>
</dbReference>
<dbReference type="PRINTS" id="PR00831">
    <property type="entry name" value="NEUROPHYSIN"/>
</dbReference>
<dbReference type="SMART" id="SM00003">
    <property type="entry name" value="NH"/>
    <property type="match status" value="1"/>
</dbReference>
<dbReference type="SUPFAM" id="SSF49606">
    <property type="entry name" value="Neurophysin II"/>
    <property type="match status" value="1"/>
</dbReference>
<dbReference type="PROSITE" id="PS00264">
    <property type="entry name" value="NEUROHYPOPHYS_HORM"/>
    <property type="match status" value="1"/>
</dbReference>
<feature type="signal peptide" evidence="3">
    <location>
        <begin position="1"/>
        <end position="19"/>
    </location>
</feature>
<feature type="peptide" id="PRO_0000020505" description="Oxytocin">
    <location>
        <begin position="20"/>
        <end position="28"/>
    </location>
</feature>
<feature type="chain" id="PRO_0000020506" description="Neurophysin 1">
    <location>
        <begin position="32"/>
        <end position="125"/>
    </location>
</feature>
<feature type="modified residue" description="Glycine amide" evidence="3">
    <location>
        <position position="28"/>
    </location>
</feature>
<feature type="disulfide bond">
    <location>
        <begin position="20"/>
        <end position="25"/>
    </location>
</feature>
<feature type="disulfide bond" evidence="1">
    <location>
        <begin position="41"/>
        <end position="85"/>
    </location>
</feature>
<feature type="disulfide bond" evidence="1">
    <location>
        <begin position="44"/>
        <end position="58"/>
    </location>
</feature>
<feature type="disulfide bond" evidence="1">
    <location>
        <begin position="52"/>
        <end position="75"/>
    </location>
</feature>
<feature type="disulfide bond" evidence="1">
    <location>
        <begin position="59"/>
        <end position="65"/>
    </location>
</feature>
<feature type="disulfide bond" evidence="1">
    <location>
        <begin position="92"/>
        <end position="104"/>
    </location>
</feature>
<feature type="disulfide bond" evidence="1">
    <location>
        <begin position="98"/>
        <end position="116"/>
    </location>
</feature>
<feature type="disulfide bond" evidence="1">
    <location>
        <begin position="105"/>
        <end position="110"/>
    </location>
</feature>
<feature type="sequence conflict" description="In Ref. 1; CAA34184/CAA34186." evidence="4" ref="1">
    <original>G</original>
    <variation>A</variation>
    <location>
        <position position="48"/>
    </location>
</feature>
<feature type="sequence conflict" description="In Ref. 1; CAA34184/CAA34186." evidence="4" ref="1">
    <original>C</original>
    <variation>S</variation>
    <location>
        <position position="110"/>
    </location>
</feature>
<comment type="function">
    <text>Neurophysin 1 specifically binds oxytocin.</text>
</comment>
<comment type="function">
    <text evidence="2">Oxytocin causes contraction of the smooth muscle of the uterus and of the mammary gland. Acts by binding to oxytocin receptor (OXTR) (By similarity).</text>
</comment>
<comment type="subunit">
    <text evidence="2">Interacts with oxytocin receptor (Ki=1.5 nM) (By similarity). Interacts with vasopressin V1aR/AVPR1A (Ki=37 nM), V1bR/AVPR1B (Ki=222 nM), and V2R/AVPR2 receptors (Ki=823 nM) (By similarity).</text>
</comment>
<comment type="similarity">
    <text evidence="4">Belongs to the vasopressin/oxytocin family.</text>
</comment>
<comment type="sequence caution" evidence="4">
    <conflict type="erroneous initiation">
        <sequence resource="EMBL-CDS" id="CAA34186"/>
    </conflict>
</comment>
<sequence length="125" mass="12635">MAGSSLACCLLGLLALTSACYIQNCPLGGKRAVLDLDVRTCLPCGPGGKGRCFGPSICCGDELGCFVGTAEALRCREENYLPSPCQSGQKPCGSGGRCAAAGICCSPDGCHADPACDPEAAFSQH</sequence>
<organism>
    <name type="scientific">Ovis aries</name>
    <name type="common">Sheep</name>
    <dbReference type="NCBI Taxonomy" id="9940"/>
    <lineage>
        <taxon>Eukaryota</taxon>
        <taxon>Metazoa</taxon>
        <taxon>Chordata</taxon>
        <taxon>Craniata</taxon>
        <taxon>Vertebrata</taxon>
        <taxon>Euteleostomi</taxon>
        <taxon>Mammalia</taxon>
        <taxon>Eutheria</taxon>
        <taxon>Laurasiatheria</taxon>
        <taxon>Artiodactyla</taxon>
        <taxon>Ruminantia</taxon>
        <taxon>Pecora</taxon>
        <taxon>Bovidae</taxon>
        <taxon>Caprinae</taxon>
        <taxon>Ovis</taxon>
    </lineage>
</organism>